<comment type="function">
    <text evidence="1">PPIases accelerate the folding of proteins. It catalyzes the cis-trans isomerization of proline imidic peptide bonds in oligopeptides (By similarity).</text>
</comment>
<comment type="catalytic activity">
    <reaction>
        <text>[protein]-peptidylproline (omega=180) = [protein]-peptidylproline (omega=0)</text>
        <dbReference type="Rhea" id="RHEA:16237"/>
        <dbReference type="Rhea" id="RHEA-COMP:10747"/>
        <dbReference type="Rhea" id="RHEA-COMP:10748"/>
        <dbReference type="ChEBI" id="CHEBI:83833"/>
        <dbReference type="ChEBI" id="CHEBI:83834"/>
        <dbReference type="EC" id="5.2.1.8"/>
    </reaction>
</comment>
<comment type="activity regulation">
    <text evidence="1">Inhibited by cyclosporin A (CsA).</text>
</comment>
<comment type="subcellular location">
    <subcellularLocation>
        <location evidence="1">Endoplasmic reticulum lumen</location>
    </subcellularLocation>
</comment>
<comment type="similarity">
    <text evidence="4">Belongs to the cyclophilin-type PPIase family. PPIase B subfamily.</text>
</comment>
<reference key="1">
    <citation type="journal article" date="2005" name="Science">
        <title>The genome of the basidiomycetous yeast and human pathogen Cryptococcus neoformans.</title>
        <authorList>
            <person name="Loftus B.J."/>
            <person name="Fung E."/>
            <person name="Roncaglia P."/>
            <person name="Rowley D."/>
            <person name="Amedeo P."/>
            <person name="Bruno D."/>
            <person name="Vamathevan J."/>
            <person name="Miranda M."/>
            <person name="Anderson I.J."/>
            <person name="Fraser J.A."/>
            <person name="Allen J.E."/>
            <person name="Bosdet I.E."/>
            <person name="Brent M.R."/>
            <person name="Chiu R."/>
            <person name="Doering T.L."/>
            <person name="Donlin M.J."/>
            <person name="D'Souza C.A."/>
            <person name="Fox D.S."/>
            <person name="Grinberg V."/>
            <person name="Fu J."/>
            <person name="Fukushima M."/>
            <person name="Haas B.J."/>
            <person name="Huang J.C."/>
            <person name="Janbon G."/>
            <person name="Jones S.J.M."/>
            <person name="Koo H.L."/>
            <person name="Krzywinski M.I."/>
            <person name="Kwon-Chung K.J."/>
            <person name="Lengeler K.B."/>
            <person name="Maiti R."/>
            <person name="Marra M.A."/>
            <person name="Marra R.E."/>
            <person name="Mathewson C.A."/>
            <person name="Mitchell T.G."/>
            <person name="Pertea M."/>
            <person name="Riggs F.R."/>
            <person name="Salzberg S.L."/>
            <person name="Schein J.E."/>
            <person name="Shvartsbeyn A."/>
            <person name="Shin H."/>
            <person name="Shumway M."/>
            <person name="Specht C.A."/>
            <person name="Suh B.B."/>
            <person name="Tenney A."/>
            <person name="Utterback T.R."/>
            <person name="Wickes B.L."/>
            <person name="Wortman J.R."/>
            <person name="Wye N.H."/>
            <person name="Kronstad J.W."/>
            <person name="Lodge J.K."/>
            <person name="Heitman J."/>
            <person name="Davis R.W."/>
            <person name="Fraser C.M."/>
            <person name="Hyman R.W."/>
        </authorList>
    </citation>
    <scope>NUCLEOTIDE SEQUENCE [LARGE SCALE GENOMIC DNA]</scope>
    <source>
        <strain>B-3501A</strain>
    </source>
</reference>
<evidence type="ECO:0000250" key="1"/>
<evidence type="ECO:0000255" key="2"/>
<evidence type="ECO:0000255" key="3">
    <source>
        <dbReference type="PROSITE-ProRule" id="PRU00156"/>
    </source>
</evidence>
<evidence type="ECO:0000305" key="4"/>
<accession>P0CP79</accession>
<accession>Q55P39</accession>
<accession>Q5KEB7</accession>
<dbReference type="EC" id="5.2.1.8"/>
<dbReference type="EMBL" id="AAEY01000038">
    <property type="protein sequence ID" value="EAL19745.1"/>
    <property type="molecule type" value="Genomic_DNA"/>
</dbReference>
<dbReference type="RefSeq" id="XP_774392.1">
    <property type="nucleotide sequence ID" value="XM_769299.1"/>
</dbReference>
<dbReference type="SMR" id="P0CP79"/>
<dbReference type="GlyCosmos" id="P0CP79">
    <property type="glycosylation" value="1 site, No reported glycans"/>
</dbReference>
<dbReference type="EnsemblFungi" id="AAW44558">
    <property type="protein sequence ID" value="AAW44558"/>
    <property type="gene ID" value="CNG01060"/>
</dbReference>
<dbReference type="GeneID" id="4937409"/>
<dbReference type="KEGG" id="cnb:CNBG3730"/>
<dbReference type="VEuPathDB" id="FungiDB:CNBG3730"/>
<dbReference type="HOGENOM" id="CLU_012062_4_2_1"/>
<dbReference type="OrthoDB" id="4244at5206"/>
<dbReference type="GO" id="GO:0005788">
    <property type="term" value="C:endoplasmic reticulum lumen"/>
    <property type="evidence" value="ECO:0007669"/>
    <property type="project" value="UniProtKB-SubCell"/>
</dbReference>
<dbReference type="GO" id="GO:0000324">
    <property type="term" value="C:fungal-type vacuole"/>
    <property type="evidence" value="ECO:0007669"/>
    <property type="project" value="TreeGrafter"/>
</dbReference>
<dbReference type="GO" id="GO:0016018">
    <property type="term" value="F:cyclosporin A binding"/>
    <property type="evidence" value="ECO:0007669"/>
    <property type="project" value="TreeGrafter"/>
</dbReference>
<dbReference type="GO" id="GO:0003755">
    <property type="term" value="F:peptidyl-prolyl cis-trans isomerase activity"/>
    <property type="evidence" value="ECO:0007669"/>
    <property type="project" value="UniProtKB-KW"/>
</dbReference>
<dbReference type="GO" id="GO:0006457">
    <property type="term" value="P:protein folding"/>
    <property type="evidence" value="ECO:0007669"/>
    <property type="project" value="InterPro"/>
</dbReference>
<dbReference type="CDD" id="cd01926">
    <property type="entry name" value="cyclophilin_ABH_like"/>
    <property type="match status" value="1"/>
</dbReference>
<dbReference type="FunFam" id="2.40.100.10:FF:000001">
    <property type="entry name" value="Peptidyl-prolyl cis-trans isomerase"/>
    <property type="match status" value="1"/>
</dbReference>
<dbReference type="Gene3D" id="2.40.100.10">
    <property type="entry name" value="Cyclophilin-like"/>
    <property type="match status" value="1"/>
</dbReference>
<dbReference type="InterPro" id="IPR029000">
    <property type="entry name" value="Cyclophilin-like_dom_sf"/>
</dbReference>
<dbReference type="InterPro" id="IPR020892">
    <property type="entry name" value="Cyclophilin-type_PPIase_CS"/>
</dbReference>
<dbReference type="InterPro" id="IPR002130">
    <property type="entry name" value="Cyclophilin-type_PPIase_dom"/>
</dbReference>
<dbReference type="PANTHER" id="PTHR11071">
    <property type="entry name" value="PEPTIDYL-PROLYL CIS-TRANS ISOMERASE"/>
    <property type="match status" value="1"/>
</dbReference>
<dbReference type="PANTHER" id="PTHR11071:SF561">
    <property type="entry name" value="PEPTIDYL-PROLYL CIS-TRANS ISOMERASE D-RELATED"/>
    <property type="match status" value="1"/>
</dbReference>
<dbReference type="Pfam" id="PF00160">
    <property type="entry name" value="Pro_isomerase"/>
    <property type="match status" value="1"/>
</dbReference>
<dbReference type="PRINTS" id="PR00153">
    <property type="entry name" value="CSAPPISMRASE"/>
</dbReference>
<dbReference type="SUPFAM" id="SSF50891">
    <property type="entry name" value="Cyclophilin-like"/>
    <property type="match status" value="1"/>
</dbReference>
<dbReference type="PROSITE" id="PS00170">
    <property type="entry name" value="CSA_PPIASE_1"/>
    <property type="match status" value="1"/>
</dbReference>
<dbReference type="PROSITE" id="PS50072">
    <property type="entry name" value="CSA_PPIASE_2"/>
    <property type="match status" value="1"/>
</dbReference>
<proteinExistence type="inferred from homology"/>
<sequence length="231" mass="24958">MNTSHPIPTTMASKSFLSLLVALFVAICFVLSPGVDAAKGPVITNKVYFDIEHGGKPLGRIVMGLYGKTVPKTAENFRALATGKNSDGEDLGYGYEGSSFHRIIKNFMIQGGDFTKGDGTGGKSIYGSKFPDENFKLKHTGPGVLSMANAGRDTNGSQFFICTVKTAWLDNRHVVFGHVLEGMDVVYAMENVKTSRGDKPVEPITIAASGELPIEHEVDEQGNQVPFRIEL</sequence>
<keyword id="KW-0256">Endoplasmic reticulum</keyword>
<keyword id="KW-0325">Glycoprotein</keyword>
<keyword id="KW-0413">Isomerase</keyword>
<keyword id="KW-0697">Rotamase</keyword>
<keyword id="KW-0732">Signal</keyword>
<feature type="signal peptide" evidence="2">
    <location>
        <begin position="1"/>
        <end position="35"/>
    </location>
</feature>
<feature type="chain" id="PRO_0000410199" description="Peptidyl-prolyl cis-trans isomerase B">
    <location>
        <begin position="36"/>
        <end position="231"/>
    </location>
</feature>
<feature type="domain" description="PPIase cyclophilin-type" evidence="3">
    <location>
        <begin position="48"/>
        <end position="211"/>
    </location>
</feature>
<feature type="short sequence motif" description="Prevents secretion from ER">
    <location>
        <begin position="228"/>
        <end position="231"/>
    </location>
</feature>
<feature type="glycosylation site" description="N-linked (GlcNAc...) asparagine" evidence="2">
    <location>
        <position position="155"/>
    </location>
</feature>
<name>PPIB_CRYNB</name>
<gene>
    <name type="primary">CPR2</name>
    <name type="ordered locus">CNBG3730</name>
</gene>
<organism>
    <name type="scientific">Cryptococcus neoformans var. neoformans serotype D (strain B-3501A)</name>
    <name type="common">Filobasidiella neoformans</name>
    <dbReference type="NCBI Taxonomy" id="283643"/>
    <lineage>
        <taxon>Eukaryota</taxon>
        <taxon>Fungi</taxon>
        <taxon>Dikarya</taxon>
        <taxon>Basidiomycota</taxon>
        <taxon>Agaricomycotina</taxon>
        <taxon>Tremellomycetes</taxon>
        <taxon>Tremellales</taxon>
        <taxon>Cryptococcaceae</taxon>
        <taxon>Cryptococcus</taxon>
        <taxon>Cryptococcus neoformans species complex</taxon>
    </lineage>
</organism>
<protein>
    <recommendedName>
        <fullName>Peptidyl-prolyl cis-trans isomerase B</fullName>
        <shortName>PPIase B</shortName>
        <ecNumber>5.2.1.8</ecNumber>
    </recommendedName>
    <alternativeName>
        <fullName>Rotamase B</fullName>
    </alternativeName>
</protein>